<gene>
    <name type="primary">Stx7</name>
    <name type="synonym">Syn7</name>
</gene>
<evidence type="ECO:0000250" key="1"/>
<evidence type="ECO:0000250" key="2">
    <source>
        <dbReference type="UniProtKB" id="O15400"/>
    </source>
</evidence>
<evidence type="ECO:0000255" key="3"/>
<evidence type="ECO:0000255" key="4">
    <source>
        <dbReference type="PROSITE-ProRule" id="PRU00202"/>
    </source>
</evidence>
<evidence type="ECO:0000256" key="5">
    <source>
        <dbReference type="SAM" id="MobiDB-lite"/>
    </source>
</evidence>
<evidence type="ECO:0000269" key="6">
    <source>
    </source>
</evidence>
<evidence type="ECO:0000269" key="7">
    <source>
    </source>
</evidence>
<evidence type="ECO:0000269" key="8">
    <source>
    </source>
</evidence>
<evidence type="ECO:0000305" key="9"/>
<evidence type="ECO:0007744" key="10">
    <source>
    </source>
</evidence>
<evidence type="ECO:0007744" key="11">
    <source>
    </source>
</evidence>
<evidence type="ECO:0007744" key="12">
    <source>
    </source>
</evidence>
<evidence type="ECO:0007829" key="13">
    <source>
        <dbReference type="PDB" id="1GL2"/>
    </source>
</evidence>
<dbReference type="EMBL" id="AF056323">
    <property type="protein sequence ID" value="AAC15971.1"/>
    <property type="molecule type" value="mRNA"/>
</dbReference>
<dbReference type="CCDS" id="CCDS23749.1"/>
<dbReference type="PDB" id="1GL2">
    <property type="method" value="X-ray"/>
    <property type="resolution" value="1.90 A"/>
    <property type="chains" value="B=169-228"/>
</dbReference>
<dbReference type="PDBsum" id="1GL2"/>
<dbReference type="SMR" id="O70439"/>
<dbReference type="CORUM" id="O70439"/>
<dbReference type="FunCoup" id="O70439">
    <property type="interactions" value="1605"/>
</dbReference>
<dbReference type="IntAct" id="O70439">
    <property type="interactions" value="5"/>
</dbReference>
<dbReference type="MINT" id="O70439"/>
<dbReference type="STRING" id="10090.ENSMUSP00000151638"/>
<dbReference type="iPTMnet" id="O70439"/>
<dbReference type="PhosphoSitePlus" id="O70439"/>
<dbReference type="SwissPalm" id="O70439"/>
<dbReference type="CPTAC" id="non-CPTAC-3880"/>
<dbReference type="jPOST" id="O70439"/>
<dbReference type="PaxDb" id="10090-ENSMUSP00000020174"/>
<dbReference type="PeptideAtlas" id="O70439"/>
<dbReference type="ProteomicsDB" id="258667"/>
<dbReference type="Pumba" id="O70439"/>
<dbReference type="TopDownProteomics" id="O70439"/>
<dbReference type="AGR" id="MGI:1858210"/>
<dbReference type="MGI" id="MGI:1858210">
    <property type="gene designation" value="Stx7"/>
</dbReference>
<dbReference type="eggNOG" id="KOG0811">
    <property type="taxonomic scope" value="Eukaryota"/>
</dbReference>
<dbReference type="InParanoid" id="O70439"/>
<dbReference type="PhylomeDB" id="O70439"/>
<dbReference type="CD-CODE" id="CE726F99">
    <property type="entry name" value="Postsynaptic density"/>
</dbReference>
<dbReference type="ChiTaRS" id="Stx7">
    <property type="organism name" value="mouse"/>
</dbReference>
<dbReference type="EvolutionaryTrace" id="O70439"/>
<dbReference type="PRO" id="PR:O70439"/>
<dbReference type="Proteomes" id="UP000000589">
    <property type="component" value="Unplaced"/>
</dbReference>
<dbReference type="RNAct" id="O70439">
    <property type="molecule type" value="protein"/>
</dbReference>
<dbReference type="GO" id="GO:0031901">
    <property type="term" value="C:early endosome membrane"/>
    <property type="evidence" value="ECO:0007669"/>
    <property type="project" value="UniProtKB-SubCell"/>
</dbReference>
<dbReference type="GO" id="GO:0005768">
    <property type="term" value="C:endosome"/>
    <property type="evidence" value="ECO:0000314"/>
    <property type="project" value="MGI"/>
</dbReference>
<dbReference type="GO" id="GO:0048471">
    <property type="term" value="C:perinuclear region of cytoplasm"/>
    <property type="evidence" value="ECO:0000314"/>
    <property type="project" value="MGI"/>
</dbReference>
<dbReference type="GO" id="GO:0030672">
    <property type="term" value="C:synaptic vesicle membrane"/>
    <property type="evidence" value="ECO:0000314"/>
    <property type="project" value="SynGO"/>
</dbReference>
<dbReference type="GO" id="GO:0005484">
    <property type="term" value="F:SNAP receptor activity"/>
    <property type="evidence" value="ECO:0007669"/>
    <property type="project" value="InterPro"/>
</dbReference>
<dbReference type="GO" id="GO:0000149">
    <property type="term" value="F:SNARE binding"/>
    <property type="evidence" value="ECO:0000266"/>
    <property type="project" value="MGI"/>
</dbReference>
<dbReference type="GO" id="GO:0006886">
    <property type="term" value="P:intracellular protein transport"/>
    <property type="evidence" value="ECO:0007669"/>
    <property type="project" value="InterPro"/>
</dbReference>
<dbReference type="GO" id="GO:0016189">
    <property type="term" value="P:synaptic vesicle to endosome fusion"/>
    <property type="evidence" value="ECO:0000314"/>
    <property type="project" value="SynGO"/>
</dbReference>
<dbReference type="CDD" id="cd15875">
    <property type="entry name" value="SNARE_syntaxin7"/>
    <property type="match status" value="1"/>
</dbReference>
<dbReference type="CDD" id="cd00179">
    <property type="entry name" value="SynN"/>
    <property type="match status" value="1"/>
</dbReference>
<dbReference type="FunFam" id="1.20.5.110:FF:000016">
    <property type="entry name" value="Syntaxin 12"/>
    <property type="match status" value="1"/>
</dbReference>
<dbReference type="FunFam" id="1.20.58.70:FF:000006">
    <property type="entry name" value="Syntaxin 7"/>
    <property type="match status" value="1"/>
</dbReference>
<dbReference type="Gene3D" id="1.20.5.110">
    <property type="match status" value="1"/>
</dbReference>
<dbReference type="Gene3D" id="1.20.58.70">
    <property type="match status" value="1"/>
</dbReference>
<dbReference type="InterPro" id="IPR010989">
    <property type="entry name" value="SNARE"/>
</dbReference>
<dbReference type="InterPro" id="IPR045242">
    <property type="entry name" value="Syntaxin"/>
</dbReference>
<dbReference type="InterPro" id="IPR006012">
    <property type="entry name" value="Syntaxin/epimorphin_CS"/>
</dbReference>
<dbReference type="InterPro" id="IPR006011">
    <property type="entry name" value="Syntaxin_N"/>
</dbReference>
<dbReference type="InterPro" id="IPR000727">
    <property type="entry name" value="T_SNARE_dom"/>
</dbReference>
<dbReference type="PANTHER" id="PTHR19957">
    <property type="entry name" value="SYNTAXIN"/>
    <property type="match status" value="1"/>
</dbReference>
<dbReference type="PANTHER" id="PTHR19957:SF90">
    <property type="entry name" value="SYNTAXIN-7"/>
    <property type="match status" value="1"/>
</dbReference>
<dbReference type="Pfam" id="PF05739">
    <property type="entry name" value="SNARE"/>
    <property type="match status" value="1"/>
</dbReference>
<dbReference type="Pfam" id="PF14523">
    <property type="entry name" value="Syntaxin_2"/>
    <property type="match status" value="1"/>
</dbReference>
<dbReference type="SMART" id="SM00503">
    <property type="entry name" value="SynN"/>
    <property type="match status" value="1"/>
</dbReference>
<dbReference type="SMART" id="SM00397">
    <property type="entry name" value="t_SNARE"/>
    <property type="match status" value="1"/>
</dbReference>
<dbReference type="SUPFAM" id="SSF47661">
    <property type="entry name" value="t-snare proteins"/>
    <property type="match status" value="1"/>
</dbReference>
<dbReference type="PROSITE" id="PS00914">
    <property type="entry name" value="SYNTAXIN"/>
    <property type="match status" value="1"/>
</dbReference>
<dbReference type="PROSITE" id="PS50192">
    <property type="entry name" value="T_SNARE"/>
    <property type="match status" value="1"/>
</dbReference>
<comment type="function">
    <text evidence="1">May be involved in protein trafficking from the plasma membrane to the early endosome (EE) as well as in homotypic fusion of endocytic organelles. Mediates the endocytic trafficking from early endosomes to late endosomes and lysosomes (By similarity).</text>
</comment>
<comment type="subunit">
    <text evidence="1 6 7 8">Interacts with VPS11, VPS16 and VPS18. Interacts with VPS33A (By similarity). Forms a SNARE complex with VTI1B, STX8 and VAMP8 which functions in the homotypic fusion of late endosomes. Component of the SNARE complex composed of STX7, STX8, VAMP7 and VTI1B that is required for heterotypic fusion of late endosomes with lysosomes. Interacts with TPC1 (PubMed:28855648).</text>
</comment>
<comment type="subcellular location">
    <subcellularLocation>
        <location evidence="1">Early endosome membrane</location>
        <topology evidence="1">Single-pass type IV membrane protein</topology>
    </subcellularLocation>
</comment>
<comment type="similarity">
    <text evidence="9">Belongs to the syntaxin family.</text>
</comment>
<sequence>MSYTPGIGGDSAQLAQRISSNIQKITQCSVEIQRTLNQLGTPQDSPELRQLLQQKQQYTNQLAKETDKYIKEFGSLPTTPSEQRQRKIQKDRLVAEFTTSLTNFQKAQRQAAEREKEFVARVRASSRVSGGFPEDSSKEKNLVSWESQTQPQVQVQDEEITEDDLRLIHERESSIRQLEADIMDINEIFKDLGMMIHEQGDMIDSIEANVESAEVHVQQANQQLSRAADYQRKSRKTLCIIIFILVVRIVIICLIVWGLKG</sequence>
<protein>
    <recommendedName>
        <fullName>Syntaxin-7</fullName>
    </recommendedName>
</protein>
<name>STX7_MOUSE</name>
<keyword id="KW-0002">3D-structure</keyword>
<keyword id="KW-0007">Acetylation</keyword>
<keyword id="KW-0175">Coiled coil</keyword>
<keyword id="KW-0967">Endosome</keyword>
<keyword id="KW-0408">Iron</keyword>
<keyword id="KW-0472">Membrane</keyword>
<keyword id="KW-0597">Phosphoprotein</keyword>
<keyword id="KW-1185">Reference proteome</keyword>
<keyword id="KW-0812">Transmembrane</keyword>
<keyword id="KW-1133">Transmembrane helix</keyword>
<organism>
    <name type="scientific">Mus musculus</name>
    <name type="common">Mouse</name>
    <dbReference type="NCBI Taxonomy" id="10090"/>
    <lineage>
        <taxon>Eukaryota</taxon>
        <taxon>Metazoa</taxon>
        <taxon>Chordata</taxon>
        <taxon>Craniata</taxon>
        <taxon>Vertebrata</taxon>
        <taxon>Euteleostomi</taxon>
        <taxon>Mammalia</taxon>
        <taxon>Eutheria</taxon>
        <taxon>Euarchontoglires</taxon>
        <taxon>Glires</taxon>
        <taxon>Rodentia</taxon>
        <taxon>Myomorpha</taxon>
        <taxon>Muroidea</taxon>
        <taxon>Muridae</taxon>
        <taxon>Murinae</taxon>
        <taxon>Mus</taxon>
        <taxon>Mus</taxon>
    </lineage>
</organism>
<reference key="1">
    <citation type="submission" date="1998-03" db="EMBL/GenBank/DDBJ databases">
        <authorList>
            <person name="Tellam J."/>
            <person name="Piper R.C."/>
            <person name="Smith C."/>
            <person name="James D.E."/>
        </authorList>
    </citation>
    <scope>NUCLEOTIDE SEQUENCE [MRNA]</scope>
    <source>
        <tissue>Adipocyte</tissue>
    </source>
</reference>
<reference key="2">
    <citation type="journal article" date="2004" name="Dev. Cell">
        <title>A role of VAMP8/endobrevin in regulated exocytosis of pancreatic acinar cells.</title>
        <authorList>
            <person name="Wang C.-C."/>
            <person name="Ng C.P."/>
            <person name="Lu L."/>
            <person name="Atlashkin V."/>
            <person name="Zhang W."/>
            <person name="Seet L.-F."/>
            <person name="Hong W."/>
        </authorList>
    </citation>
    <scope>IDENTIFICATION IN A COMPLEX WITH VAMP8 AND VTI1B</scope>
</reference>
<reference key="3">
    <citation type="journal article" date="2004" name="Mol. Cell. Proteomics">
        <title>Phosphoproteomic analysis of the developing mouse brain.</title>
        <authorList>
            <person name="Ballif B.A."/>
            <person name="Villen J."/>
            <person name="Beausoleil S.A."/>
            <person name="Schwartz D."/>
            <person name="Gygi S.P."/>
        </authorList>
    </citation>
    <scope>IDENTIFICATION BY MASS SPECTROMETRY [LARGE SCALE ANALYSIS]</scope>
    <source>
        <tissue>Embryonic brain</tissue>
    </source>
</reference>
<reference key="4">
    <citation type="journal article" date="2007" name="Proc. Natl. Acad. Sci. U.S.A.">
        <title>Large-scale phosphorylation analysis of mouse liver.</title>
        <authorList>
            <person name="Villen J."/>
            <person name="Beausoleil S.A."/>
            <person name="Gerber S.A."/>
            <person name="Gygi S.P."/>
        </authorList>
    </citation>
    <scope>PHOSPHORYLATION [LARGE SCALE ANALYSIS] AT SER-125; SER-126 AND SER-129</scope>
    <scope>IDENTIFICATION BY MASS SPECTROMETRY [LARGE SCALE ANALYSIS]</scope>
    <source>
        <tissue>Liver</tissue>
    </source>
</reference>
<reference key="5">
    <citation type="journal article" date="2009" name="Immunity">
        <title>The phagosomal proteome in interferon-gamma-activated macrophages.</title>
        <authorList>
            <person name="Trost M."/>
            <person name="English L."/>
            <person name="Lemieux S."/>
            <person name="Courcelles M."/>
            <person name="Desjardins M."/>
            <person name="Thibault P."/>
        </authorList>
    </citation>
    <scope>PHOSPHORYLATION [LARGE SCALE ANALYSIS] AT SER-45; THR-79; SER-126; SER-129 AND SER-205</scope>
    <scope>IDENTIFICATION BY MASS SPECTROMETRY [LARGE SCALE ANALYSIS]</scope>
</reference>
<reference key="6">
    <citation type="journal article" date="2010" name="Cell">
        <title>A tissue-specific atlas of mouse protein phosphorylation and expression.</title>
        <authorList>
            <person name="Huttlin E.L."/>
            <person name="Jedrychowski M.P."/>
            <person name="Elias J.E."/>
            <person name="Goswami T."/>
            <person name="Rad R."/>
            <person name="Beausoleil S.A."/>
            <person name="Villen J."/>
            <person name="Haas W."/>
            <person name="Sowa M.E."/>
            <person name="Gygi S.P."/>
        </authorList>
    </citation>
    <scope>PHOSPHORYLATION [LARGE SCALE ANALYSIS] AT SER-45; THR-79 AND SER-129</scope>
    <scope>IDENTIFICATION BY MASS SPECTROMETRY [LARGE SCALE ANALYSIS]</scope>
    <source>
        <tissue>Brain</tissue>
        <tissue>Heart</tissue>
        <tissue>Kidney</tissue>
        <tissue>Liver</tissue>
        <tissue>Lung</tissue>
        <tissue>Pancreas</tissue>
        <tissue>Spleen</tissue>
        <tissue>Testis</tissue>
    </source>
</reference>
<reference key="7">
    <citation type="journal article" date="2017" name="Sci. Rep.">
        <title>The two-pore channel TPC1 is required for efficient protein processing through early and recycling endosomes.</title>
        <authorList>
            <person name="Castonguay J."/>
            <person name="Orth J.H.C."/>
            <person name="Mueller T."/>
            <person name="Sleman F."/>
            <person name="Grimm C."/>
            <person name="Wahl-Schott C."/>
            <person name="Biel M."/>
            <person name="Mallmann R.T."/>
            <person name="Bildl W."/>
            <person name="Schulte U."/>
            <person name="Klugbauer N."/>
        </authorList>
    </citation>
    <scope>INTERACTION WITH TPC1</scope>
</reference>
<reference key="8">
    <citation type="journal article" date="2002" name="Nat. Struct. Biol.">
        <title>Crystal structure of the endosomal SNARE complex reveals common structural principles of all SNAREs.</title>
        <authorList>
            <person name="Antonin W."/>
            <person name="Fasshauer D."/>
            <person name="Becker S."/>
            <person name="Jahn R."/>
            <person name="Schneider T.R."/>
        </authorList>
    </citation>
    <scope>X-RAY CRYSTALLOGRAPHY (1.9 ANGSTROMS) OF 169-229 IN COMPLEX WITH VAMP8; STX8 AND VTI1B</scope>
</reference>
<feature type="initiator methionine" description="Removed" evidence="2">
    <location>
        <position position="1"/>
    </location>
</feature>
<feature type="chain" id="PRO_0000210214" description="Syntaxin-7">
    <location>
        <begin position="2"/>
        <end position="261"/>
    </location>
</feature>
<feature type="topological domain" description="Cytoplasmic" evidence="3">
    <location>
        <begin position="2"/>
        <end position="238"/>
    </location>
</feature>
<feature type="transmembrane region" description="Helical; Anchor for type IV membrane protein" evidence="3">
    <location>
        <begin position="239"/>
        <end position="259"/>
    </location>
</feature>
<feature type="topological domain" description="Vesicular" evidence="3">
    <location>
        <begin position="260"/>
        <end position="261"/>
    </location>
</feature>
<feature type="domain" description="t-SNARE coiled-coil homology" evidence="4">
    <location>
        <begin position="165"/>
        <end position="227"/>
    </location>
</feature>
<feature type="region of interest" description="Disordered" evidence="5">
    <location>
        <begin position="128"/>
        <end position="148"/>
    </location>
</feature>
<feature type="coiled-coil region" evidence="3">
    <location>
        <begin position="47"/>
        <end position="68"/>
    </location>
</feature>
<feature type="modified residue" description="N-acetylserine" evidence="2">
    <location>
        <position position="2"/>
    </location>
</feature>
<feature type="modified residue" description="Phosphothreonine" evidence="2">
    <location>
        <position position="4"/>
    </location>
</feature>
<feature type="modified residue" description="Phosphoserine" evidence="11 12">
    <location>
        <position position="45"/>
    </location>
</feature>
<feature type="modified residue" description="Phosphoserine" evidence="2">
    <location>
        <position position="75"/>
    </location>
</feature>
<feature type="modified residue" description="Phosphothreonine" evidence="11 12">
    <location>
        <position position="79"/>
    </location>
</feature>
<feature type="modified residue" description="Phosphoserine" evidence="10">
    <location>
        <position position="125"/>
    </location>
</feature>
<feature type="modified residue" description="Phosphoserine" evidence="10 11">
    <location>
        <position position="126"/>
    </location>
</feature>
<feature type="modified residue" description="Phosphoserine" evidence="10 11 12">
    <location>
        <position position="129"/>
    </location>
</feature>
<feature type="modified residue" description="Phosphoserine" evidence="11">
    <location>
        <position position="205"/>
    </location>
</feature>
<feature type="helix" evidence="13">
    <location>
        <begin position="170"/>
        <end position="226"/>
    </location>
</feature>
<accession>O70439</accession>
<proteinExistence type="evidence at protein level"/>